<protein>
    <recommendedName>
        <fullName evidence="1">Large ribosomal subunit protein uL22</fullName>
    </recommendedName>
    <alternativeName>
        <fullName evidence="2">50S ribosomal protein L22</fullName>
    </alternativeName>
</protein>
<gene>
    <name evidence="1" type="primary">rplV</name>
    <name type="ordered locus">CBUD_1849</name>
</gene>
<organism>
    <name type="scientific">Coxiella burnetii (strain Dugway 5J108-111)</name>
    <dbReference type="NCBI Taxonomy" id="434922"/>
    <lineage>
        <taxon>Bacteria</taxon>
        <taxon>Pseudomonadati</taxon>
        <taxon>Pseudomonadota</taxon>
        <taxon>Gammaproteobacteria</taxon>
        <taxon>Legionellales</taxon>
        <taxon>Coxiellaceae</taxon>
        <taxon>Coxiella</taxon>
    </lineage>
</organism>
<comment type="function">
    <text evidence="1">This protein binds specifically to 23S rRNA; its binding is stimulated by other ribosomal proteins, e.g. L4, L17, and L20. It is important during the early stages of 50S assembly. It makes multiple contacts with different domains of the 23S rRNA in the assembled 50S subunit and ribosome (By similarity).</text>
</comment>
<comment type="function">
    <text evidence="1">The globular domain of the protein is located near the polypeptide exit tunnel on the outside of the subunit, while an extended beta-hairpin is found that lines the wall of the exit tunnel in the center of the 70S ribosome.</text>
</comment>
<comment type="subunit">
    <text evidence="1">Part of the 50S ribosomal subunit.</text>
</comment>
<comment type="similarity">
    <text evidence="1">Belongs to the universal ribosomal protein uL22 family.</text>
</comment>
<keyword id="KW-0687">Ribonucleoprotein</keyword>
<keyword id="KW-0689">Ribosomal protein</keyword>
<keyword id="KW-0694">RNA-binding</keyword>
<keyword id="KW-0699">rRNA-binding</keyword>
<feature type="chain" id="PRO_1000086550" description="Large ribosomal subunit protein uL22">
    <location>
        <begin position="1"/>
        <end position="115"/>
    </location>
</feature>
<proteinExistence type="inferred from homology"/>
<name>RL22_COXBN</name>
<evidence type="ECO:0000255" key="1">
    <source>
        <dbReference type="HAMAP-Rule" id="MF_01331"/>
    </source>
</evidence>
<evidence type="ECO:0000305" key="2"/>
<accession>A9KD26</accession>
<reference key="1">
    <citation type="journal article" date="2009" name="Infect. Immun.">
        <title>Comparative genomics reveal extensive transposon-mediated genomic plasticity and diversity among potential effector proteins within the genus Coxiella.</title>
        <authorList>
            <person name="Beare P.A."/>
            <person name="Unsworth N."/>
            <person name="Andoh M."/>
            <person name="Voth D.E."/>
            <person name="Omsland A."/>
            <person name="Gilk S.D."/>
            <person name="Williams K.P."/>
            <person name="Sobral B.W."/>
            <person name="Kupko J.J. III"/>
            <person name="Porcella S.F."/>
            <person name="Samuel J.E."/>
            <person name="Heinzen R.A."/>
        </authorList>
    </citation>
    <scope>NUCLEOTIDE SEQUENCE [LARGE SCALE GENOMIC DNA]</scope>
    <source>
        <strain>Dugway 5J108-111</strain>
    </source>
</reference>
<sequence length="115" mass="12582">MEVAAKLKYARISAQKARLVADQVRGLGAEQAVNLLRFSNKKAAALMKKVLDSAIANAEHNEGADIDELKVSTVMVDEGPSARRFHARARGRANQILKRTCHITVKVSDSQVEND</sequence>
<dbReference type="EMBL" id="CP000733">
    <property type="protein sequence ID" value="ABS77733.1"/>
    <property type="molecule type" value="Genomic_DNA"/>
</dbReference>
<dbReference type="RefSeq" id="WP_010957457.1">
    <property type="nucleotide sequence ID" value="NC_009727.1"/>
</dbReference>
<dbReference type="SMR" id="A9KD26"/>
<dbReference type="KEGG" id="cbd:CBUD_1849"/>
<dbReference type="HOGENOM" id="CLU_083987_3_3_6"/>
<dbReference type="Proteomes" id="UP000008555">
    <property type="component" value="Chromosome"/>
</dbReference>
<dbReference type="GO" id="GO:0022625">
    <property type="term" value="C:cytosolic large ribosomal subunit"/>
    <property type="evidence" value="ECO:0007669"/>
    <property type="project" value="TreeGrafter"/>
</dbReference>
<dbReference type="GO" id="GO:0019843">
    <property type="term" value="F:rRNA binding"/>
    <property type="evidence" value="ECO:0007669"/>
    <property type="project" value="UniProtKB-UniRule"/>
</dbReference>
<dbReference type="GO" id="GO:0003735">
    <property type="term" value="F:structural constituent of ribosome"/>
    <property type="evidence" value="ECO:0007669"/>
    <property type="project" value="InterPro"/>
</dbReference>
<dbReference type="GO" id="GO:0006412">
    <property type="term" value="P:translation"/>
    <property type="evidence" value="ECO:0007669"/>
    <property type="project" value="UniProtKB-UniRule"/>
</dbReference>
<dbReference type="CDD" id="cd00336">
    <property type="entry name" value="Ribosomal_L22"/>
    <property type="match status" value="1"/>
</dbReference>
<dbReference type="FunFam" id="3.90.470.10:FF:000001">
    <property type="entry name" value="50S ribosomal protein L22"/>
    <property type="match status" value="1"/>
</dbReference>
<dbReference type="Gene3D" id="3.90.470.10">
    <property type="entry name" value="Ribosomal protein L22/L17"/>
    <property type="match status" value="1"/>
</dbReference>
<dbReference type="HAMAP" id="MF_01331_B">
    <property type="entry name" value="Ribosomal_uL22_B"/>
    <property type="match status" value="1"/>
</dbReference>
<dbReference type="InterPro" id="IPR001063">
    <property type="entry name" value="Ribosomal_uL22"/>
</dbReference>
<dbReference type="InterPro" id="IPR005727">
    <property type="entry name" value="Ribosomal_uL22_bac/chlpt-type"/>
</dbReference>
<dbReference type="InterPro" id="IPR047867">
    <property type="entry name" value="Ribosomal_uL22_bac/org-type"/>
</dbReference>
<dbReference type="InterPro" id="IPR018260">
    <property type="entry name" value="Ribosomal_uL22_CS"/>
</dbReference>
<dbReference type="InterPro" id="IPR036394">
    <property type="entry name" value="Ribosomal_uL22_sf"/>
</dbReference>
<dbReference type="NCBIfam" id="TIGR01044">
    <property type="entry name" value="rplV_bact"/>
    <property type="match status" value="1"/>
</dbReference>
<dbReference type="PANTHER" id="PTHR13501">
    <property type="entry name" value="CHLOROPLAST 50S RIBOSOMAL PROTEIN L22-RELATED"/>
    <property type="match status" value="1"/>
</dbReference>
<dbReference type="PANTHER" id="PTHR13501:SF8">
    <property type="entry name" value="LARGE RIBOSOMAL SUBUNIT PROTEIN UL22M"/>
    <property type="match status" value="1"/>
</dbReference>
<dbReference type="Pfam" id="PF00237">
    <property type="entry name" value="Ribosomal_L22"/>
    <property type="match status" value="1"/>
</dbReference>
<dbReference type="SUPFAM" id="SSF54843">
    <property type="entry name" value="Ribosomal protein L22"/>
    <property type="match status" value="1"/>
</dbReference>
<dbReference type="PROSITE" id="PS00464">
    <property type="entry name" value="RIBOSOMAL_L22"/>
    <property type="match status" value="1"/>
</dbReference>